<sequence>MTDRPTTALPGAQIAGRPVKVGFISLGCAKNLVDTESMIGLLRNTGYQITNRAEEADVLVVNTCGFIDAAKQESVDAILEAAQHKTRGRCQALVVAGCMVPRYGEELAREIPEIDALVGTADYPRIGEVVAGILAGQRVQQISDPDSITDWNFERVLATPGYTAYLKIAEGCDCACAFCSIPLMRGRHRSRPIESIVDEARRLAGMGVRELVVISQDTTYYGLDLYRKPMLARLLRELAQVDGIRWIRIHYSYPTRITDELIEVIVTEPKVLNYLDLPLQHGSNRVLRIMNRPANAEGYLRLVQKLRERVPDICLRSTFIAGHPGETEEDFELLLDFLRACEFDHVGVFAYSQEEGTKAGQMEQLPEEVRLARRDRAMEVQQEIARRRNQLQVGRELEVLVEGRSPQGRGWFVGRCYGQSPGIDGVVLFRAPAGAELKPGDMVQVRITGVQDYDLLGEATEPLTVDGIAQEQDLILPVFHLTRHQ</sequence>
<evidence type="ECO:0000255" key="1">
    <source>
        <dbReference type="HAMAP-Rule" id="MF_01865"/>
    </source>
</evidence>
<evidence type="ECO:0000255" key="2">
    <source>
        <dbReference type="PROSITE-ProRule" id="PRU01266"/>
    </source>
</evidence>
<accession>Q67NX5</accession>
<gene>
    <name evidence="1" type="primary">rimO</name>
    <name type="ordered locus">STH1633</name>
</gene>
<feature type="chain" id="PRO_0000375028" description="Ribosomal protein uS12 methylthiotransferase RimO">
    <location>
        <begin position="1"/>
        <end position="485"/>
    </location>
</feature>
<feature type="domain" description="MTTase N-terminal" evidence="1">
    <location>
        <begin position="19"/>
        <end position="135"/>
    </location>
</feature>
<feature type="domain" description="Radical SAM core" evidence="2">
    <location>
        <begin position="158"/>
        <end position="387"/>
    </location>
</feature>
<feature type="domain" description="TRAM" evidence="1">
    <location>
        <begin position="390"/>
        <end position="461"/>
    </location>
</feature>
<feature type="binding site" evidence="1">
    <location>
        <position position="28"/>
    </location>
    <ligand>
        <name>[4Fe-4S] cluster</name>
        <dbReference type="ChEBI" id="CHEBI:49883"/>
        <label>1</label>
    </ligand>
</feature>
<feature type="binding site" evidence="1">
    <location>
        <position position="64"/>
    </location>
    <ligand>
        <name>[4Fe-4S] cluster</name>
        <dbReference type="ChEBI" id="CHEBI:49883"/>
        <label>1</label>
    </ligand>
</feature>
<feature type="binding site" evidence="1">
    <location>
        <position position="98"/>
    </location>
    <ligand>
        <name>[4Fe-4S] cluster</name>
        <dbReference type="ChEBI" id="CHEBI:49883"/>
        <label>1</label>
    </ligand>
</feature>
<feature type="binding site" evidence="1">
    <location>
        <position position="172"/>
    </location>
    <ligand>
        <name>[4Fe-4S] cluster</name>
        <dbReference type="ChEBI" id="CHEBI:49883"/>
        <label>2</label>
        <note>4Fe-4S-S-AdoMet</note>
    </ligand>
</feature>
<feature type="binding site" evidence="1">
    <location>
        <position position="176"/>
    </location>
    <ligand>
        <name>[4Fe-4S] cluster</name>
        <dbReference type="ChEBI" id="CHEBI:49883"/>
        <label>2</label>
        <note>4Fe-4S-S-AdoMet</note>
    </ligand>
</feature>
<feature type="binding site" evidence="1">
    <location>
        <position position="179"/>
    </location>
    <ligand>
        <name>[4Fe-4S] cluster</name>
        <dbReference type="ChEBI" id="CHEBI:49883"/>
        <label>2</label>
        <note>4Fe-4S-S-AdoMet</note>
    </ligand>
</feature>
<protein>
    <recommendedName>
        <fullName evidence="1">Ribosomal protein uS12 methylthiotransferase RimO</fullName>
        <shortName evidence="1">uS12 MTTase</shortName>
        <shortName evidence="1">uS12 methylthiotransferase</shortName>
        <ecNumber evidence="1">2.8.4.4</ecNumber>
    </recommendedName>
    <alternativeName>
        <fullName evidence="1">Ribosomal protein uS12 (aspartate-C(3))-methylthiotransferase</fullName>
    </alternativeName>
    <alternativeName>
        <fullName evidence="1">Ribosome maturation factor RimO</fullName>
    </alternativeName>
</protein>
<comment type="function">
    <text evidence="1">Catalyzes the methylthiolation of an aspartic acid residue of ribosomal protein uS12.</text>
</comment>
<comment type="catalytic activity">
    <reaction evidence="1">
        <text>L-aspartate(89)-[ribosomal protein uS12]-hydrogen + (sulfur carrier)-SH + AH2 + 2 S-adenosyl-L-methionine = 3-methylsulfanyl-L-aspartate(89)-[ribosomal protein uS12]-hydrogen + (sulfur carrier)-H + 5'-deoxyadenosine + L-methionine + A + S-adenosyl-L-homocysteine + 2 H(+)</text>
        <dbReference type="Rhea" id="RHEA:37087"/>
        <dbReference type="Rhea" id="RHEA-COMP:10460"/>
        <dbReference type="Rhea" id="RHEA-COMP:10461"/>
        <dbReference type="Rhea" id="RHEA-COMP:14737"/>
        <dbReference type="Rhea" id="RHEA-COMP:14739"/>
        <dbReference type="ChEBI" id="CHEBI:13193"/>
        <dbReference type="ChEBI" id="CHEBI:15378"/>
        <dbReference type="ChEBI" id="CHEBI:17319"/>
        <dbReference type="ChEBI" id="CHEBI:17499"/>
        <dbReference type="ChEBI" id="CHEBI:29917"/>
        <dbReference type="ChEBI" id="CHEBI:29961"/>
        <dbReference type="ChEBI" id="CHEBI:57844"/>
        <dbReference type="ChEBI" id="CHEBI:57856"/>
        <dbReference type="ChEBI" id="CHEBI:59789"/>
        <dbReference type="ChEBI" id="CHEBI:64428"/>
        <dbReference type="ChEBI" id="CHEBI:73599"/>
        <dbReference type="EC" id="2.8.4.4"/>
    </reaction>
</comment>
<comment type="cofactor">
    <cofactor evidence="1">
        <name>[4Fe-4S] cluster</name>
        <dbReference type="ChEBI" id="CHEBI:49883"/>
    </cofactor>
    <text evidence="1">Binds 2 [4Fe-4S] clusters. One cluster is coordinated with 3 cysteines and an exchangeable S-adenosyl-L-methionine.</text>
</comment>
<comment type="subcellular location">
    <subcellularLocation>
        <location evidence="1">Cytoplasm</location>
    </subcellularLocation>
</comment>
<comment type="similarity">
    <text evidence="1">Belongs to the methylthiotransferase family. RimO subfamily.</text>
</comment>
<keyword id="KW-0004">4Fe-4S</keyword>
<keyword id="KW-0963">Cytoplasm</keyword>
<keyword id="KW-0408">Iron</keyword>
<keyword id="KW-0411">Iron-sulfur</keyword>
<keyword id="KW-0479">Metal-binding</keyword>
<keyword id="KW-1185">Reference proteome</keyword>
<keyword id="KW-0949">S-adenosyl-L-methionine</keyword>
<keyword id="KW-0808">Transferase</keyword>
<name>RIMO_SYMTH</name>
<dbReference type="EC" id="2.8.4.4" evidence="1"/>
<dbReference type="EMBL" id="AP006840">
    <property type="protein sequence ID" value="BAD40618.1"/>
    <property type="molecule type" value="Genomic_DNA"/>
</dbReference>
<dbReference type="RefSeq" id="WP_011195762.1">
    <property type="nucleotide sequence ID" value="NC_006177.1"/>
</dbReference>
<dbReference type="SMR" id="Q67NX5"/>
<dbReference type="STRING" id="292459.STH1633"/>
<dbReference type="KEGG" id="sth:STH1633"/>
<dbReference type="eggNOG" id="COG0621">
    <property type="taxonomic scope" value="Bacteria"/>
</dbReference>
<dbReference type="HOGENOM" id="CLU_018697_0_1_9"/>
<dbReference type="OrthoDB" id="9805215at2"/>
<dbReference type="Proteomes" id="UP000000417">
    <property type="component" value="Chromosome"/>
</dbReference>
<dbReference type="GO" id="GO:0005829">
    <property type="term" value="C:cytosol"/>
    <property type="evidence" value="ECO:0007669"/>
    <property type="project" value="TreeGrafter"/>
</dbReference>
<dbReference type="GO" id="GO:0051539">
    <property type="term" value="F:4 iron, 4 sulfur cluster binding"/>
    <property type="evidence" value="ECO:0007669"/>
    <property type="project" value="UniProtKB-UniRule"/>
</dbReference>
<dbReference type="GO" id="GO:0035599">
    <property type="term" value="F:aspartic acid methylthiotransferase activity"/>
    <property type="evidence" value="ECO:0007669"/>
    <property type="project" value="TreeGrafter"/>
</dbReference>
<dbReference type="GO" id="GO:0046872">
    <property type="term" value="F:metal ion binding"/>
    <property type="evidence" value="ECO:0007669"/>
    <property type="project" value="UniProtKB-KW"/>
</dbReference>
<dbReference type="GO" id="GO:0103039">
    <property type="term" value="F:protein methylthiotransferase activity"/>
    <property type="evidence" value="ECO:0007669"/>
    <property type="project" value="UniProtKB-EC"/>
</dbReference>
<dbReference type="GO" id="GO:0006400">
    <property type="term" value="P:tRNA modification"/>
    <property type="evidence" value="ECO:0007669"/>
    <property type="project" value="InterPro"/>
</dbReference>
<dbReference type="CDD" id="cd01335">
    <property type="entry name" value="Radical_SAM"/>
    <property type="match status" value="1"/>
</dbReference>
<dbReference type="FunFam" id="3.80.30.20:FF:000001">
    <property type="entry name" value="tRNA-2-methylthio-N(6)-dimethylallyladenosine synthase 2"/>
    <property type="match status" value="1"/>
</dbReference>
<dbReference type="Gene3D" id="3.40.50.12160">
    <property type="entry name" value="Methylthiotransferase, N-terminal domain"/>
    <property type="match status" value="1"/>
</dbReference>
<dbReference type="Gene3D" id="2.40.50.140">
    <property type="entry name" value="Nucleic acid-binding proteins"/>
    <property type="match status" value="1"/>
</dbReference>
<dbReference type="Gene3D" id="3.80.30.20">
    <property type="entry name" value="tm_1862 like domain"/>
    <property type="match status" value="1"/>
</dbReference>
<dbReference type="HAMAP" id="MF_01865">
    <property type="entry name" value="MTTase_RimO"/>
    <property type="match status" value="1"/>
</dbReference>
<dbReference type="InterPro" id="IPR006638">
    <property type="entry name" value="Elp3/MiaA/NifB-like_rSAM"/>
</dbReference>
<dbReference type="InterPro" id="IPR005839">
    <property type="entry name" value="Methylthiotransferase"/>
</dbReference>
<dbReference type="InterPro" id="IPR020612">
    <property type="entry name" value="Methylthiotransferase_CS"/>
</dbReference>
<dbReference type="InterPro" id="IPR013848">
    <property type="entry name" value="Methylthiotransferase_N"/>
</dbReference>
<dbReference type="InterPro" id="IPR038135">
    <property type="entry name" value="Methylthiotransferase_N_sf"/>
</dbReference>
<dbReference type="InterPro" id="IPR012340">
    <property type="entry name" value="NA-bd_OB-fold"/>
</dbReference>
<dbReference type="InterPro" id="IPR005840">
    <property type="entry name" value="Ribosomal_uS12_MeSTrfase_RimO"/>
</dbReference>
<dbReference type="InterPro" id="IPR007197">
    <property type="entry name" value="rSAM"/>
</dbReference>
<dbReference type="InterPro" id="IPR023404">
    <property type="entry name" value="rSAM_horseshoe"/>
</dbReference>
<dbReference type="InterPro" id="IPR002792">
    <property type="entry name" value="TRAM_dom"/>
</dbReference>
<dbReference type="NCBIfam" id="TIGR01125">
    <property type="entry name" value="30S ribosomal protein S12 methylthiotransferase RimO"/>
    <property type="match status" value="1"/>
</dbReference>
<dbReference type="NCBIfam" id="TIGR00089">
    <property type="entry name" value="MiaB/RimO family radical SAM methylthiotransferase"/>
    <property type="match status" value="1"/>
</dbReference>
<dbReference type="PANTHER" id="PTHR43837">
    <property type="entry name" value="RIBOSOMAL PROTEIN S12 METHYLTHIOTRANSFERASE RIMO"/>
    <property type="match status" value="1"/>
</dbReference>
<dbReference type="PANTHER" id="PTHR43837:SF1">
    <property type="entry name" value="RIBOSOMAL PROTEIN US12 METHYLTHIOTRANSFERASE RIMO"/>
    <property type="match status" value="1"/>
</dbReference>
<dbReference type="Pfam" id="PF04055">
    <property type="entry name" value="Radical_SAM"/>
    <property type="match status" value="1"/>
</dbReference>
<dbReference type="Pfam" id="PF18693">
    <property type="entry name" value="TRAM_2"/>
    <property type="match status" value="1"/>
</dbReference>
<dbReference type="Pfam" id="PF00919">
    <property type="entry name" value="UPF0004"/>
    <property type="match status" value="1"/>
</dbReference>
<dbReference type="SFLD" id="SFLDG01082">
    <property type="entry name" value="B12-binding_domain_containing"/>
    <property type="match status" value="1"/>
</dbReference>
<dbReference type="SFLD" id="SFLDG01061">
    <property type="entry name" value="methylthiotransferase"/>
    <property type="match status" value="1"/>
</dbReference>
<dbReference type="SFLD" id="SFLDF00274">
    <property type="entry name" value="ribosomal_protein_S12_methylth"/>
    <property type="match status" value="1"/>
</dbReference>
<dbReference type="SMART" id="SM00729">
    <property type="entry name" value="Elp3"/>
    <property type="match status" value="1"/>
</dbReference>
<dbReference type="SUPFAM" id="SSF102114">
    <property type="entry name" value="Radical SAM enzymes"/>
    <property type="match status" value="1"/>
</dbReference>
<dbReference type="PROSITE" id="PS51449">
    <property type="entry name" value="MTTASE_N"/>
    <property type="match status" value="1"/>
</dbReference>
<dbReference type="PROSITE" id="PS01278">
    <property type="entry name" value="MTTASE_RADICAL"/>
    <property type="match status" value="1"/>
</dbReference>
<dbReference type="PROSITE" id="PS51918">
    <property type="entry name" value="RADICAL_SAM"/>
    <property type="match status" value="1"/>
</dbReference>
<dbReference type="PROSITE" id="PS50926">
    <property type="entry name" value="TRAM"/>
    <property type="match status" value="1"/>
</dbReference>
<proteinExistence type="inferred from homology"/>
<reference key="1">
    <citation type="journal article" date="2004" name="Nucleic Acids Res.">
        <title>Genome sequence of Symbiobacterium thermophilum, an uncultivable bacterium that depends on microbial commensalism.</title>
        <authorList>
            <person name="Ueda K."/>
            <person name="Yamashita A."/>
            <person name="Ishikawa J."/>
            <person name="Shimada M."/>
            <person name="Watsuji T."/>
            <person name="Morimura K."/>
            <person name="Ikeda H."/>
            <person name="Hattori M."/>
            <person name="Beppu T."/>
        </authorList>
    </citation>
    <scope>NUCLEOTIDE SEQUENCE [LARGE SCALE GENOMIC DNA]</scope>
    <source>
        <strain>DSM 24528 / JCM 14929 / IAM 14863 / T</strain>
    </source>
</reference>
<organism>
    <name type="scientific">Symbiobacterium thermophilum (strain DSM 24528 / JCM 14929 / IAM 14863 / T)</name>
    <dbReference type="NCBI Taxonomy" id="292459"/>
    <lineage>
        <taxon>Bacteria</taxon>
        <taxon>Bacillati</taxon>
        <taxon>Bacillota</taxon>
        <taxon>Clostridia</taxon>
        <taxon>Eubacteriales</taxon>
        <taxon>Symbiobacteriaceae</taxon>
        <taxon>Symbiobacterium</taxon>
    </lineage>
</organism>